<proteinExistence type="evidence at protein level"/>
<evidence type="ECO:0000255" key="1">
    <source>
        <dbReference type="PROSITE-ProRule" id="PRU00027"/>
    </source>
</evidence>
<evidence type="ECO:0000256" key="2">
    <source>
        <dbReference type="SAM" id="MobiDB-lite"/>
    </source>
</evidence>
<evidence type="ECO:0000269" key="3">
    <source>
    </source>
</evidence>
<evidence type="ECO:0000269" key="4">
    <source>
    </source>
</evidence>
<evidence type="ECO:0000269" key="5">
    <source>
    </source>
</evidence>
<evidence type="ECO:0000269" key="6">
    <source>
    </source>
</evidence>
<evidence type="ECO:0000269" key="7">
    <source>
    </source>
</evidence>
<evidence type="ECO:0000269" key="8">
    <source>
    </source>
</evidence>
<evidence type="ECO:0000303" key="9">
    <source>
    </source>
</evidence>
<evidence type="ECO:0000305" key="10"/>
<evidence type="ECO:0000312" key="11">
    <source>
        <dbReference type="Araport" id="AT1G30970"/>
    </source>
</evidence>
<evidence type="ECO:0000312" key="12">
    <source>
        <dbReference type="EMBL" id="AAF98186.1"/>
    </source>
</evidence>
<organism>
    <name type="scientific">Arabidopsis thaliana</name>
    <name type="common">Mouse-ear cress</name>
    <dbReference type="NCBI Taxonomy" id="3702"/>
    <lineage>
        <taxon>Eukaryota</taxon>
        <taxon>Viridiplantae</taxon>
        <taxon>Streptophyta</taxon>
        <taxon>Embryophyta</taxon>
        <taxon>Tracheophyta</taxon>
        <taxon>Spermatophyta</taxon>
        <taxon>Magnoliopsida</taxon>
        <taxon>eudicotyledons</taxon>
        <taxon>Gunneridae</taxon>
        <taxon>Pentapetalae</taxon>
        <taxon>rosids</taxon>
        <taxon>malvids</taxon>
        <taxon>Brassicales</taxon>
        <taxon>Brassicaceae</taxon>
        <taxon>Camelineae</taxon>
        <taxon>Arabidopsis</taxon>
    </lineage>
</organism>
<protein>
    <recommendedName>
        <fullName evidence="9">Protein SUPPRESSOR OF FRI 4</fullName>
    </recommendedName>
</protein>
<dbReference type="EMBL" id="AC000107">
    <property type="protein sequence ID" value="AAF98186.1"/>
    <property type="status" value="ALT_SEQ"/>
    <property type="molecule type" value="Genomic_DNA"/>
</dbReference>
<dbReference type="EMBL" id="CP002684">
    <property type="protein sequence ID" value="AEE31298.1"/>
    <property type="molecule type" value="Genomic_DNA"/>
</dbReference>
<dbReference type="EMBL" id="CP002684">
    <property type="protein sequence ID" value="AEE31299.1"/>
    <property type="molecule type" value="Genomic_DNA"/>
</dbReference>
<dbReference type="EMBL" id="AF360277">
    <property type="protein sequence ID" value="AAK25987.1"/>
    <property type="molecule type" value="mRNA"/>
</dbReference>
<dbReference type="EMBL" id="AY051039">
    <property type="protein sequence ID" value="AAK93716.1"/>
    <property type="molecule type" value="mRNA"/>
</dbReference>
<dbReference type="EMBL" id="AY085612">
    <property type="protein sequence ID" value="AAM62833.1"/>
    <property type="molecule type" value="mRNA"/>
</dbReference>
<dbReference type="EMBL" id="AY039540">
    <property type="protein sequence ID" value="AAK62595.1"/>
    <property type="molecule type" value="mRNA"/>
</dbReference>
<dbReference type="EMBL" id="AK221417">
    <property type="protein sequence ID" value="BAD94400.1"/>
    <property type="status" value="ALT_INIT"/>
    <property type="molecule type" value="mRNA"/>
</dbReference>
<dbReference type="RefSeq" id="NP_001077634.1">
    <molecule id="Q9C5G0-2"/>
    <property type="nucleotide sequence ID" value="NM_001084165.1"/>
</dbReference>
<dbReference type="RefSeq" id="NP_564369.1">
    <molecule id="Q9C5G0-1"/>
    <property type="nucleotide sequence ID" value="NM_102836.3"/>
</dbReference>
<dbReference type="SMR" id="Q9C5G0"/>
<dbReference type="BioGRID" id="25219">
    <property type="interactions" value="17"/>
</dbReference>
<dbReference type="FunCoup" id="Q9C5G0">
    <property type="interactions" value="706"/>
</dbReference>
<dbReference type="IntAct" id="Q9C5G0">
    <property type="interactions" value="12"/>
</dbReference>
<dbReference type="MINT" id="Q9C5G0"/>
<dbReference type="STRING" id="3702.Q9C5G0"/>
<dbReference type="GlyGen" id="Q9C5G0">
    <property type="glycosylation" value="2 sites"/>
</dbReference>
<dbReference type="PaxDb" id="3702-AT1G30970.1"/>
<dbReference type="ProteomicsDB" id="228399">
    <molecule id="Q9C5G0-1"/>
</dbReference>
<dbReference type="EnsemblPlants" id="AT1G30970.1">
    <molecule id="Q9C5G0-1"/>
    <property type="protein sequence ID" value="AT1G30970.1"/>
    <property type="gene ID" value="AT1G30970"/>
</dbReference>
<dbReference type="EnsemblPlants" id="AT1G30970.2">
    <molecule id="Q9C5G0-2"/>
    <property type="protein sequence ID" value="AT1G30970.2"/>
    <property type="gene ID" value="AT1G30970"/>
</dbReference>
<dbReference type="GeneID" id="839984"/>
<dbReference type="Gramene" id="AT1G30970.1">
    <molecule id="Q9C5G0-1"/>
    <property type="protein sequence ID" value="AT1G30970.1"/>
    <property type="gene ID" value="AT1G30970"/>
</dbReference>
<dbReference type="Gramene" id="AT1G30970.2">
    <molecule id="Q9C5G0-2"/>
    <property type="protein sequence ID" value="AT1G30970.2"/>
    <property type="gene ID" value="AT1G30970"/>
</dbReference>
<dbReference type="KEGG" id="ath:AT1G30970"/>
<dbReference type="Araport" id="AT1G30970"/>
<dbReference type="TAIR" id="AT1G30970">
    <property type="gene designation" value="SUF4"/>
</dbReference>
<dbReference type="eggNOG" id="KOG2893">
    <property type="taxonomic scope" value="Eukaryota"/>
</dbReference>
<dbReference type="HOGENOM" id="CLU_037132_1_0_1"/>
<dbReference type="InParanoid" id="Q9C5G0"/>
<dbReference type="OMA" id="FVPPMTQ"/>
<dbReference type="PhylomeDB" id="Q9C5G0"/>
<dbReference type="PRO" id="PR:Q9C5G0"/>
<dbReference type="Proteomes" id="UP000006548">
    <property type="component" value="Chromosome 1"/>
</dbReference>
<dbReference type="ExpressionAtlas" id="Q9C5G0">
    <property type="expression patterns" value="baseline and differential"/>
</dbReference>
<dbReference type="GO" id="GO:0005634">
    <property type="term" value="C:nucleus"/>
    <property type="evidence" value="ECO:0000314"/>
    <property type="project" value="UniProtKB"/>
</dbReference>
<dbReference type="GO" id="GO:0003677">
    <property type="term" value="F:DNA binding"/>
    <property type="evidence" value="ECO:0000314"/>
    <property type="project" value="TAIR"/>
</dbReference>
<dbReference type="GO" id="GO:0003700">
    <property type="term" value="F:DNA-binding transcription factor activity"/>
    <property type="evidence" value="ECO:0000250"/>
    <property type="project" value="TAIR"/>
</dbReference>
<dbReference type="GO" id="GO:0046982">
    <property type="term" value="F:protein heterodimerization activity"/>
    <property type="evidence" value="ECO:0000353"/>
    <property type="project" value="TAIR"/>
</dbReference>
<dbReference type="GO" id="GO:0042803">
    <property type="term" value="F:protein homodimerization activity"/>
    <property type="evidence" value="ECO:0000353"/>
    <property type="project" value="TAIR"/>
</dbReference>
<dbReference type="GO" id="GO:0000976">
    <property type="term" value="F:transcription cis-regulatory region binding"/>
    <property type="evidence" value="ECO:0000353"/>
    <property type="project" value="TAIR"/>
</dbReference>
<dbReference type="GO" id="GO:0008270">
    <property type="term" value="F:zinc ion binding"/>
    <property type="evidence" value="ECO:0007669"/>
    <property type="project" value="UniProtKB-KW"/>
</dbReference>
<dbReference type="GO" id="GO:0030154">
    <property type="term" value="P:cell differentiation"/>
    <property type="evidence" value="ECO:0007669"/>
    <property type="project" value="UniProtKB-KW"/>
</dbReference>
<dbReference type="GO" id="GO:0009908">
    <property type="term" value="P:flower development"/>
    <property type="evidence" value="ECO:0007669"/>
    <property type="project" value="UniProtKB-KW"/>
</dbReference>
<dbReference type="GO" id="GO:0009910">
    <property type="term" value="P:negative regulation of flower development"/>
    <property type="evidence" value="ECO:0000316"/>
    <property type="project" value="TAIR"/>
</dbReference>
<dbReference type="GO" id="GO:0006355">
    <property type="term" value="P:regulation of DNA-templated transcription"/>
    <property type="evidence" value="ECO:0000315"/>
    <property type="project" value="TAIR"/>
</dbReference>
<dbReference type="CDD" id="cd20908">
    <property type="entry name" value="SUF4-like"/>
    <property type="match status" value="1"/>
</dbReference>
<dbReference type="Gene3D" id="3.30.160.60">
    <property type="entry name" value="Classic Zinc Finger"/>
    <property type="match status" value="1"/>
</dbReference>
<dbReference type="InterPro" id="IPR003656">
    <property type="entry name" value="Znf_BED"/>
</dbReference>
<dbReference type="InterPro" id="IPR036236">
    <property type="entry name" value="Znf_C2H2_sf"/>
</dbReference>
<dbReference type="InterPro" id="IPR013087">
    <property type="entry name" value="Znf_C2H2_type"/>
</dbReference>
<dbReference type="PANTHER" id="PTHR23215:SF0">
    <property type="entry name" value="BUB3-INTERACTING AND GLEBS MOTIF-CONTAINING PROTEIN ZNF207"/>
    <property type="match status" value="1"/>
</dbReference>
<dbReference type="PANTHER" id="PTHR23215">
    <property type="entry name" value="ZINC FINGER PROTEIN 207"/>
    <property type="match status" value="1"/>
</dbReference>
<dbReference type="SMART" id="SM00355">
    <property type="entry name" value="ZnF_C2H2"/>
    <property type="match status" value="2"/>
</dbReference>
<dbReference type="SUPFAM" id="SSF57667">
    <property type="entry name" value="beta-beta-alpha zinc fingers"/>
    <property type="match status" value="1"/>
</dbReference>
<dbReference type="PROSITE" id="PS50808">
    <property type="entry name" value="ZF_BED"/>
    <property type="match status" value="1"/>
</dbReference>
<reference key="1">
    <citation type="journal article" date="2000" name="Nature">
        <title>Sequence and analysis of chromosome 1 of the plant Arabidopsis thaliana.</title>
        <authorList>
            <person name="Theologis A."/>
            <person name="Ecker J.R."/>
            <person name="Palm C.J."/>
            <person name="Federspiel N.A."/>
            <person name="Kaul S."/>
            <person name="White O."/>
            <person name="Alonso J."/>
            <person name="Altafi H."/>
            <person name="Araujo R."/>
            <person name="Bowman C.L."/>
            <person name="Brooks S.Y."/>
            <person name="Buehler E."/>
            <person name="Chan A."/>
            <person name="Chao Q."/>
            <person name="Chen H."/>
            <person name="Cheuk R.F."/>
            <person name="Chin C.W."/>
            <person name="Chung M.K."/>
            <person name="Conn L."/>
            <person name="Conway A.B."/>
            <person name="Conway A.R."/>
            <person name="Creasy T.H."/>
            <person name="Dewar K."/>
            <person name="Dunn P."/>
            <person name="Etgu P."/>
            <person name="Feldblyum T.V."/>
            <person name="Feng J.-D."/>
            <person name="Fong B."/>
            <person name="Fujii C.Y."/>
            <person name="Gill J.E."/>
            <person name="Goldsmith A.D."/>
            <person name="Haas B."/>
            <person name="Hansen N.F."/>
            <person name="Hughes B."/>
            <person name="Huizar L."/>
            <person name="Hunter J.L."/>
            <person name="Jenkins J."/>
            <person name="Johnson-Hopson C."/>
            <person name="Khan S."/>
            <person name="Khaykin E."/>
            <person name="Kim C.J."/>
            <person name="Koo H.L."/>
            <person name="Kremenetskaia I."/>
            <person name="Kurtz D.B."/>
            <person name="Kwan A."/>
            <person name="Lam B."/>
            <person name="Langin-Hooper S."/>
            <person name="Lee A."/>
            <person name="Lee J.M."/>
            <person name="Lenz C.A."/>
            <person name="Li J.H."/>
            <person name="Li Y.-P."/>
            <person name="Lin X."/>
            <person name="Liu S.X."/>
            <person name="Liu Z.A."/>
            <person name="Luros J.S."/>
            <person name="Maiti R."/>
            <person name="Marziali A."/>
            <person name="Militscher J."/>
            <person name="Miranda M."/>
            <person name="Nguyen M."/>
            <person name="Nierman W.C."/>
            <person name="Osborne B.I."/>
            <person name="Pai G."/>
            <person name="Peterson J."/>
            <person name="Pham P.K."/>
            <person name="Rizzo M."/>
            <person name="Rooney T."/>
            <person name="Rowley D."/>
            <person name="Sakano H."/>
            <person name="Salzberg S.L."/>
            <person name="Schwartz J.R."/>
            <person name="Shinn P."/>
            <person name="Southwick A.M."/>
            <person name="Sun H."/>
            <person name="Tallon L.J."/>
            <person name="Tambunga G."/>
            <person name="Toriumi M.J."/>
            <person name="Town C.D."/>
            <person name="Utterback T."/>
            <person name="Van Aken S."/>
            <person name="Vaysberg M."/>
            <person name="Vysotskaia V.S."/>
            <person name="Walker M."/>
            <person name="Wu D."/>
            <person name="Yu G."/>
            <person name="Fraser C.M."/>
            <person name="Venter J.C."/>
            <person name="Davis R.W."/>
        </authorList>
    </citation>
    <scope>NUCLEOTIDE SEQUENCE [LARGE SCALE GENOMIC DNA]</scope>
    <source>
        <strain>cv. Columbia</strain>
    </source>
</reference>
<reference key="2">
    <citation type="journal article" date="2017" name="Plant J.">
        <title>Araport11: a complete reannotation of the Arabidopsis thaliana reference genome.</title>
        <authorList>
            <person name="Cheng C.Y."/>
            <person name="Krishnakumar V."/>
            <person name="Chan A.P."/>
            <person name="Thibaud-Nissen F."/>
            <person name="Schobel S."/>
            <person name="Town C.D."/>
        </authorList>
    </citation>
    <scope>GENOME REANNOTATION</scope>
    <source>
        <strain>cv. Columbia</strain>
    </source>
</reference>
<reference key="3">
    <citation type="journal article" date="2003" name="Science">
        <title>Empirical analysis of transcriptional activity in the Arabidopsis genome.</title>
        <authorList>
            <person name="Yamada K."/>
            <person name="Lim J."/>
            <person name="Dale J.M."/>
            <person name="Chen H."/>
            <person name="Shinn P."/>
            <person name="Palm C.J."/>
            <person name="Southwick A.M."/>
            <person name="Wu H.C."/>
            <person name="Kim C.J."/>
            <person name="Nguyen M."/>
            <person name="Pham P.K."/>
            <person name="Cheuk R.F."/>
            <person name="Karlin-Newmann G."/>
            <person name="Liu S.X."/>
            <person name="Lam B."/>
            <person name="Sakano H."/>
            <person name="Wu T."/>
            <person name="Yu G."/>
            <person name="Miranda M."/>
            <person name="Quach H.L."/>
            <person name="Tripp M."/>
            <person name="Chang C.H."/>
            <person name="Lee J.M."/>
            <person name="Toriumi M.J."/>
            <person name="Chan M.M."/>
            <person name="Tang C.C."/>
            <person name="Onodera C.S."/>
            <person name="Deng J.M."/>
            <person name="Akiyama K."/>
            <person name="Ansari Y."/>
            <person name="Arakawa T."/>
            <person name="Banh J."/>
            <person name="Banno F."/>
            <person name="Bowser L."/>
            <person name="Brooks S.Y."/>
            <person name="Carninci P."/>
            <person name="Chao Q."/>
            <person name="Choy N."/>
            <person name="Enju A."/>
            <person name="Goldsmith A.D."/>
            <person name="Gurjal M."/>
            <person name="Hansen N.F."/>
            <person name="Hayashizaki Y."/>
            <person name="Johnson-Hopson C."/>
            <person name="Hsuan V.W."/>
            <person name="Iida K."/>
            <person name="Karnes M."/>
            <person name="Khan S."/>
            <person name="Koesema E."/>
            <person name="Ishida J."/>
            <person name="Jiang P.X."/>
            <person name="Jones T."/>
            <person name="Kawai J."/>
            <person name="Kamiya A."/>
            <person name="Meyers C."/>
            <person name="Nakajima M."/>
            <person name="Narusaka M."/>
            <person name="Seki M."/>
            <person name="Sakurai T."/>
            <person name="Satou M."/>
            <person name="Tamse R."/>
            <person name="Vaysberg M."/>
            <person name="Wallender E.K."/>
            <person name="Wong C."/>
            <person name="Yamamura Y."/>
            <person name="Yuan S."/>
            <person name="Shinozaki K."/>
            <person name="Davis R.W."/>
            <person name="Theologis A."/>
            <person name="Ecker J.R."/>
        </authorList>
    </citation>
    <scope>NUCLEOTIDE SEQUENCE [LARGE SCALE MRNA] (ISOFORM 1)</scope>
    <source>
        <strain>cv. Columbia</strain>
    </source>
</reference>
<reference key="4">
    <citation type="submission" date="2002-03" db="EMBL/GenBank/DDBJ databases">
        <title>Full-length cDNA from Arabidopsis thaliana.</title>
        <authorList>
            <person name="Brover V.V."/>
            <person name="Troukhan M.E."/>
            <person name="Alexandrov N.A."/>
            <person name="Lu Y.-P."/>
            <person name="Flavell R.B."/>
            <person name="Feldmann K.A."/>
        </authorList>
    </citation>
    <scope>NUCLEOTIDE SEQUENCE [LARGE SCALE MRNA] (ISOFORM 1)</scope>
</reference>
<reference key="5">
    <citation type="submission" date="2005-03" db="EMBL/GenBank/DDBJ databases">
        <title>Large-scale analysis of RIKEN Arabidopsis full-length (RAFL) cDNAs.</title>
        <authorList>
            <person name="Totoki Y."/>
            <person name="Seki M."/>
            <person name="Ishida J."/>
            <person name="Nakajima M."/>
            <person name="Enju A."/>
            <person name="Kamiya A."/>
            <person name="Narusaka M."/>
            <person name="Shin-i T."/>
            <person name="Nakagawa M."/>
            <person name="Sakamoto N."/>
            <person name="Oishi K."/>
            <person name="Kohara Y."/>
            <person name="Kobayashi M."/>
            <person name="Toyoda A."/>
            <person name="Sakaki Y."/>
            <person name="Sakurai T."/>
            <person name="Iida K."/>
            <person name="Akiyama K."/>
            <person name="Satou M."/>
            <person name="Toyoda T."/>
            <person name="Konagaya A."/>
            <person name="Carninci P."/>
            <person name="Kawai J."/>
            <person name="Hayashizaki Y."/>
            <person name="Shinozaki K."/>
        </authorList>
    </citation>
    <scope>NUCLEOTIDE SEQUENCE [LARGE SCALE MRNA] OF 150-367</scope>
</reference>
<reference key="6">
    <citation type="journal article" date="2006" name="Development">
        <title>SUPPRESSOR OF FRI 4 encodes a nuclear-localized protein that is required for delayed flowering in winter-annual Arabidopsis.</title>
        <authorList>
            <person name="Kim S.Y."/>
            <person name="Michaels S.D."/>
        </authorList>
    </citation>
    <scope>FUNCTION</scope>
    <scope>DISRUPTION PHENOTYPE</scope>
    <scope>ALTERNATIVE SPLICING</scope>
    <scope>SUBCELLULAR LOCATION</scope>
    <scope>TISSUE SPECIFICITY</scope>
    <scope>INDUCTION</scope>
</reference>
<reference key="7">
    <citation type="journal article" date="2006" name="Plant Cell">
        <title>SUPPRESSOR OF FRIGIDA4, encoding a C2H2-Type zinc finger protein, represses flowering by transcriptional activation of Arabidopsis FLOWERING LOCUS C.</title>
        <authorList>
            <person name="Kim S."/>
            <person name="Choi K."/>
            <person name="Park C."/>
            <person name="Hwang H.J."/>
            <person name="Lee I."/>
        </authorList>
    </citation>
    <scope>FUNCTION</scope>
    <scope>DISRUPTION PHENOTYPE</scope>
    <scope>TISSUE SPECIFICITY</scope>
    <scope>INDUCTION</scope>
    <scope>ALTERNATIVE SPLICING</scope>
    <scope>DEVELOPMENTAL STAGE</scope>
    <scope>SUBCELLULAR LOCATION</scope>
    <scope>SUBUNIT</scope>
    <scope>INTERACTION WITH LD; FRI AND FRL1</scope>
</reference>
<reference key="8">
    <citation type="journal article" date="2009" name="Plant J.">
        <title>Resetting and regulation of Flowering Locus C expression during Arabidopsis reproductive development.</title>
        <authorList>
            <person name="Choi J."/>
            <person name="Hyun Y."/>
            <person name="Kang M.J."/>
            <person name="In Yun H."/>
            <person name="Yun J.Y."/>
            <person name="Lister C."/>
            <person name="Dean C."/>
            <person name="Amasino R.M."/>
            <person name="Noh B."/>
            <person name="Noh Y.S."/>
            <person name="Choi Y."/>
        </authorList>
    </citation>
    <scope>FUNCTION</scope>
</reference>
<reference key="9">
    <citation type="journal article" date="2010" name="EMBO J.">
        <title>Growth habit determination by the balance of histone methylation activities in Arabidopsis.</title>
        <authorList>
            <person name="Ko J.H."/>
            <person name="Mitina I."/>
            <person name="Tamada Y."/>
            <person name="Hyun Y."/>
            <person name="Choi Y."/>
            <person name="Amasino R.M."/>
            <person name="Noh B."/>
            <person name="Noh Y.S."/>
        </authorList>
    </citation>
    <scope>INTERACTION WITH ASHH2</scope>
</reference>
<reference key="10">
    <citation type="journal article" date="2011" name="Plant Cell">
        <title>The FRIGIDA complex activates transcription of FLC, a strong flowering repressor in Arabidopsis, by recruiting chromatin modification factors.</title>
        <authorList>
            <person name="Choi K."/>
            <person name="Kim J."/>
            <person name="Hwang H.J."/>
            <person name="Kim S."/>
            <person name="Park C."/>
            <person name="Kim S.Y."/>
            <person name="Lee I."/>
        </authorList>
    </citation>
    <scope>FUNCTION</scope>
    <scope>IDENTIFICATION BY MASS SPECTROMETRY IN THE FRI-C COMPLEX</scope>
    <scope>INTERACTION WITH FRI; SWC6 AND FRL1</scope>
</reference>
<reference key="11">
    <citation type="journal article" date="2014" name="Nat. Commun.">
        <title>MED18 interaction with distinct transcription factors regulates multiple plant functions.</title>
        <authorList>
            <person name="Lai Z."/>
            <person name="Schluttenhofer C.M."/>
            <person name="Bhide K."/>
            <person name="Shreve J."/>
            <person name="Thimmapuram J."/>
            <person name="Lee S.Y."/>
            <person name="Yun D.-J."/>
            <person name="Mengiste T."/>
        </authorList>
    </citation>
    <scope>INTERACTION WITH MED18</scope>
    <scope>SUBCELLULAR LOCATION</scope>
    <source>
        <strain>cv. Columbia</strain>
    </source>
</reference>
<feature type="chain" id="PRO_0000423725" description="Protein SUPPRESSOR OF FRI 4">
    <location>
        <begin position="1"/>
        <end position="367"/>
    </location>
</feature>
<feature type="zinc finger region" description="BED-type" evidence="1">
    <location>
        <begin position="7"/>
        <end position="66"/>
    </location>
</feature>
<feature type="region of interest" description="Disordered" evidence="2">
    <location>
        <begin position="246"/>
        <end position="309"/>
    </location>
</feature>
<feature type="compositionally biased region" description="Polar residues" evidence="2">
    <location>
        <begin position="273"/>
        <end position="295"/>
    </location>
</feature>
<feature type="binding site" evidence="1">
    <location>
        <position position="38"/>
    </location>
    <ligand>
        <name>Zn(2+)</name>
        <dbReference type="ChEBI" id="CHEBI:29105"/>
    </ligand>
</feature>
<feature type="binding site" evidence="1">
    <location>
        <position position="41"/>
    </location>
    <ligand>
        <name>Zn(2+)</name>
        <dbReference type="ChEBI" id="CHEBI:29105"/>
    </ligand>
</feature>
<feature type="binding site" evidence="1">
    <location>
        <position position="54"/>
    </location>
    <ligand>
        <name>Zn(2+)</name>
        <dbReference type="ChEBI" id="CHEBI:29105"/>
    </ligand>
</feature>
<feature type="binding site" evidence="1">
    <location>
        <position position="59"/>
    </location>
    <ligand>
        <name>Zn(2+)</name>
        <dbReference type="ChEBI" id="CHEBI:29105"/>
    </ligand>
</feature>
<feature type="splice variant" id="VSP_053263" description="In isoform 2." evidence="10">
    <original>MGKKKKRATEKVWCYYCDREFDDEKILVQHQKAKHFKCHVCHKKLSTASGMVIHVLQVHKENVTK</original>
    <variation>MFFRFIKRMLQSI</variation>
    <location>
        <begin position="1"/>
        <end position="65"/>
    </location>
</feature>
<feature type="sequence conflict" description="In Ref. 3; AAK62595." evidence="10" ref="3">
    <original>P</original>
    <variation>F</variation>
    <location>
        <position position="154"/>
    </location>
</feature>
<feature type="sequence conflict" description="In Ref. 4; AAM62833." evidence="10" ref="4">
    <original>D</original>
    <variation>N</variation>
    <location>
        <position position="269"/>
    </location>
</feature>
<keyword id="KW-0025">Alternative splicing</keyword>
<keyword id="KW-0217">Developmental protein</keyword>
<keyword id="KW-0221">Differentiation</keyword>
<keyword id="KW-0238">DNA-binding</keyword>
<keyword id="KW-0287">Flowering</keyword>
<keyword id="KW-0479">Metal-binding</keyword>
<keyword id="KW-0539">Nucleus</keyword>
<keyword id="KW-1185">Reference proteome</keyword>
<keyword id="KW-0862">Zinc</keyword>
<keyword id="KW-0863">Zinc-finger</keyword>
<sequence>MGKKKKRATEKVWCYYCDREFDDEKILVQHQKAKHFKCHVCHKKLSTASGMVIHVLQVHKENVTKVPNAKDGRDSTDIEIYGMQGIPPHVLTAHYGEEEDEPPAKVAKVEIPSAPLGGVVPRPYGMVYPPQQVPGAVPARPMYYPGPPMRHPAPVWQMPPPRPQQWYPQNPALSVPPAAHLGYRPQPLFPVQNMGMTPTPTSAPAIQPSPVTGVTPPGIPTSSPAMPVPQPLFPVVNNSIPSQAPPFSAPLPVGGAQQPSHADALGSADAYPPNNSIPGGTNAHSYASGPNTSGPSIGPPPVIANKAPSNQPNEVYLVWDDEAMSMEERRMSLPKYKVHDETSQMNSINAAIDRRISESRLAGRMAF</sequence>
<name>SUF4_ARATH</name>
<gene>
    <name evidence="9" type="primary">SUF4</name>
    <name evidence="11" type="ordered locus">At1g30970</name>
    <name evidence="12" type="ORF">F17F8.14</name>
</gene>
<comment type="function">
    <text evidence="3 4 5 7">Sequence-specific DNA binding factor that recognizes the 5'-CCAAATTTTAAGTTT-3' sequence. Recruits the FRI-C complex to the FLC promoter. Required for FRI-mediated FLC activation, but has no effect on the expression of MAF1, MAF2, MAF3, MAF5, UFC and CO. Dispensable for the reactivation of FLC in early embryogenesis, but required to maintain high levels of FLC expression in later embryonic and vegetative development.</text>
</comment>
<comment type="subunit">
    <text evidence="4 6 7 8">Homodimer. Component of the transcription activator complex FRI-C composed of FRI, FRL1, SUF4, FLX and FES1. Interacts with LD, ASHH2, FRL1, (via C-terminus) with FRI (via C-terminus), and with SWC6, a component of the SWR1 chromatin-remodeling complex. Binds to MED18 to regulate flowering time; recruits MED18 to FLC promoter (PubMed:24451981).</text>
</comment>
<comment type="interaction">
    <interactant intactId="EBI-2126140">
        <id>Q9C5G0</id>
    </interactant>
    <interactant intactId="EBI-2126171">
        <id>Q9FDW0</id>
        <label>FRI</label>
    </interactant>
    <organismsDiffer>false</organismsDiffer>
    <experiments>3</experiments>
</comment>
<comment type="interaction">
    <interactant intactId="EBI-2126140">
        <id>Q9C5G0</id>
    </interactant>
    <interactant intactId="EBI-2126272">
        <id>Q9FFF1</id>
        <label>FRL1</label>
    </interactant>
    <organismsDiffer>false</organismsDiffer>
    <experiments>3</experiments>
</comment>
<comment type="interaction">
    <interactant intactId="EBI-2126140">
        <id>Q9C5G0</id>
    </interactant>
    <interactant intactId="EBI-2126221">
        <id>Q38796</id>
        <label>LD</label>
    </interactant>
    <organismsDiffer>false</organismsDiffer>
    <experiments>3</experiments>
</comment>
<comment type="subcellular location">
    <subcellularLocation>
        <location evidence="3 4 8">Nucleus</location>
    </subcellularLocation>
</comment>
<comment type="alternative products">
    <event type="alternative splicing"/>
    <isoform>
        <id>Q9C5G0-1</id>
        <name>1</name>
        <sequence type="displayed"/>
    </isoform>
    <isoform>
        <id>Q9C5G0-2</id>
        <name>2</name>
        <sequence type="described" ref="VSP_053263"/>
    </isoform>
</comment>
<comment type="tissue specificity">
    <text evidence="3 4">Expressed in root, shoot apex, leaves, stem and flowers. Expressed in expanding leaves, in the vasculature of fully expanded leaves, in the inflorescence, throughout young floral primordia, in the carpels of older flowers and in fertilized ovules.</text>
</comment>
<comment type="developmental stage">
    <text evidence="4">Barely detectable in 3-days-old seedling, and then increases.</text>
</comment>
<comment type="induction">
    <text evidence="3 4">Not regulated by photoperiod or vernalization.</text>
</comment>
<comment type="disruption phenotype">
    <text evidence="3 4">Early flowering.</text>
</comment>
<comment type="sequence caution" evidence="10">
    <conflict type="erroneous gene model prediction">
        <sequence resource="EMBL-CDS" id="AAF98186"/>
    </conflict>
</comment>
<comment type="sequence caution" evidence="10">
    <conflict type="erroneous initiation">
        <sequence resource="EMBL-CDS" id="BAD94400"/>
    </conflict>
    <text>Truncated N-terminus.</text>
</comment>
<accession>Q9C5G0</accession>
<accession>F4I7U0</accession>
<accession>Q56YA6</accession>
<accession>Q8LE54</accession>
<accession>Q94BZ2</accession>
<accession>Q9FYI5</accession>